<comment type="function">
    <text evidence="1">Catalyzes the last two steps in the biosynthesis of 5-methylaminomethyl-2-thiouridine (mnm(5)s(2)U) at the wobble position (U34) in tRNA. Catalyzes the FAD-dependent demodification of cmnm(5)s(2)U34 to nm(5)s(2)U34, followed by the transfer of a methyl group from S-adenosyl-L-methionine to nm(5)s(2)U34, to form mnm(5)s(2)U34.</text>
</comment>
<comment type="catalytic activity">
    <reaction evidence="1">
        <text>5-aminomethyl-2-thiouridine(34) in tRNA + S-adenosyl-L-methionine = 5-methylaminomethyl-2-thiouridine(34) in tRNA + S-adenosyl-L-homocysteine + H(+)</text>
        <dbReference type="Rhea" id="RHEA:19569"/>
        <dbReference type="Rhea" id="RHEA-COMP:10195"/>
        <dbReference type="Rhea" id="RHEA-COMP:10197"/>
        <dbReference type="ChEBI" id="CHEBI:15378"/>
        <dbReference type="ChEBI" id="CHEBI:57856"/>
        <dbReference type="ChEBI" id="CHEBI:59789"/>
        <dbReference type="ChEBI" id="CHEBI:74454"/>
        <dbReference type="ChEBI" id="CHEBI:74455"/>
        <dbReference type="EC" id="2.1.1.61"/>
    </reaction>
</comment>
<comment type="cofactor">
    <cofactor evidence="1">
        <name>FAD</name>
        <dbReference type="ChEBI" id="CHEBI:57692"/>
    </cofactor>
</comment>
<comment type="subcellular location">
    <subcellularLocation>
        <location evidence="1">Cytoplasm</location>
    </subcellularLocation>
</comment>
<comment type="similarity">
    <text evidence="1">In the N-terminal section; belongs to the methyltransferase superfamily. tRNA (mnm(5)s(2)U34)-methyltransferase family.</text>
</comment>
<comment type="similarity">
    <text evidence="1">In the C-terminal section; belongs to the DAO family.</text>
</comment>
<feature type="chain" id="PRO_1000065014" description="tRNA 5-methylaminomethyl-2-thiouridine biosynthesis bifunctional protein MnmC">
    <location>
        <begin position="1"/>
        <end position="689"/>
    </location>
</feature>
<feature type="region of interest" description="tRNA (mnm(5)s(2)U34)-methyltransferase">
    <location>
        <begin position="1"/>
        <end position="245"/>
    </location>
</feature>
<feature type="region of interest" description="FAD-dependent cmnm(5)s(2)U34 oxidoreductase">
    <location>
        <begin position="270"/>
        <end position="689"/>
    </location>
</feature>
<proteinExistence type="inferred from homology"/>
<reference key="1">
    <citation type="journal article" date="2007" name="PLoS Genet.">
        <title>The complete genome sequence of Yersinia pseudotuberculosis IP31758, the causative agent of Far East scarlet-like fever.</title>
        <authorList>
            <person name="Eppinger M."/>
            <person name="Rosovitz M.J."/>
            <person name="Fricke W.F."/>
            <person name="Rasko D.A."/>
            <person name="Kokorina G."/>
            <person name="Fayolle C."/>
            <person name="Lindler L.E."/>
            <person name="Carniel E."/>
            <person name="Ravel J."/>
        </authorList>
    </citation>
    <scope>NUCLEOTIDE SEQUENCE [LARGE SCALE GENOMIC DNA]</scope>
    <source>
        <strain>IP 31758</strain>
    </source>
</reference>
<organism>
    <name type="scientific">Yersinia pseudotuberculosis serotype O:1b (strain IP 31758)</name>
    <dbReference type="NCBI Taxonomy" id="349747"/>
    <lineage>
        <taxon>Bacteria</taxon>
        <taxon>Pseudomonadati</taxon>
        <taxon>Pseudomonadota</taxon>
        <taxon>Gammaproteobacteria</taxon>
        <taxon>Enterobacterales</taxon>
        <taxon>Yersiniaceae</taxon>
        <taxon>Yersinia</taxon>
    </lineage>
</organism>
<evidence type="ECO:0000255" key="1">
    <source>
        <dbReference type="HAMAP-Rule" id="MF_01102"/>
    </source>
</evidence>
<gene>
    <name evidence="1" type="primary">mnmC</name>
    <name type="ordered locus">YpsIP31758_1410</name>
</gene>
<sequence>MNQRPIQTATLSWNEQGTPVSEQFGDIYFSNEDGLEETHHVFLKGNGFPARFASHPQQSCIFAETGFGTGLNFLTLWRDFALFRQQSPNATLRRLHYISFEKYPLHVADLASAHARWPELASFAEQLRAQWPLPLAGCHRILLADGAITLDLWFGDVNTLLPTLDDSLNNQVDAWFLDGFAPAKNPDMWNEQLFNAMARMTRPGGTFSTFTAAGFVRRGLQQAGFNVTKVKGFGQKREMLTGTLPQQIHAPTAPWYHRPAATRCDDIAIIGGGIVSALTALALQRRGAVVTLYCADAQPAQGASGNRQGALYPLLNGKNDALETFFTSAFTFARRQYDQLLEQGIAFDHQWCGVSQLAFDDKSRGKIEKMLHTQWPVEFAEAMSREQLSELAGLDCAHDGIHYPAGGWLCPSDLTHALMMLAQQHGMTCHYQHELQRLKRIDNQWQLTFGQSQAAKHHATVILATGHRLPEWEQTHHLPLSAVRGQVSHIPTTPVLSQLQQVLCYDGYLTPVNPANQHHCIGASYQRGDIATDFRLTEQQENRERLLRCLPQVSWPQQVDVSDNQARCGVRCAIRDHLPMVGAVPDYAATLAQYQDLSRRIQHGGESEVNDIAVAPVWPELFMVGGLGSRGLCSAPLVAEILAAQMFGEPLPLDAKTLAALNPNRFWIRKLLKGRPVQTRSPATQESSR</sequence>
<accession>A7FGL1</accession>
<protein>
    <recommendedName>
        <fullName evidence="1">tRNA 5-methylaminomethyl-2-thiouridine biosynthesis bifunctional protein MnmC</fullName>
        <shortName evidence="1">tRNA mnm(5)s(2)U biosynthesis bifunctional protein</shortName>
    </recommendedName>
    <domain>
        <recommendedName>
            <fullName evidence="1">tRNA (mnm(5)s(2)U34)-methyltransferase</fullName>
            <ecNumber evidence="1">2.1.1.61</ecNumber>
        </recommendedName>
    </domain>
    <domain>
        <recommendedName>
            <fullName evidence="1">FAD-dependent cmnm(5)s(2)U34 oxidoreductase</fullName>
            <ecNumber evidence="1">1.5.-.-</ecNumber>
        </recommendedName>
    </domain>
</protein>
<keyword id="KW-0963">Cytoplasm</keyword>
<keyword id="KW-0274">FAD</keyword>
<keyword id="KW-0285">Flavoprotein</keyword>
<keyword id="KW-0489">Methyltransferase</keyword>
<keyword id="KW-0511">Multifunctional enzyme</keyword>
<keyword id="KW-0560">Oxidoreductase</keyword>
<keyword id="KW-0949">S-adenosyl-L-methionine</keyword>
<keyword id="KW-0808">Transferase</keyword>
<keyword id="KW-0819">tRNA processing</keyword>
<dbReference type="EC" id="2.1.1.61" evidence="1"/>
<dbReference type="EC" id="1.5.-.-" evidence="1"/>
<dbReference type="EMBL" id="CP000720">
    <property type="protein sequence ID" value="ABS46463.1"/>
    <property type="molecule type" value="Genomic_DNA"/>
</dbReference>
<dbReference type="RefSeq" id="WP_012104886.1">
    <property type="nucleotide sequence ID" value="NC_009708.1"/>
</dbReference>
<dbReference type="SMR" id="A7FGL1"/>
<dbReference type="GeneID" id="49785370"/>
<dbReference type="KEGG" id="ypi:YpsIP31758_1410"/>
<dbReference type="HOGENOM" id="CLU_022427_2_1_6"/>
<dbReference type="Proteomes" id="UP000002412">
    <property type="component" value="Chromosome"/>
</dbReference>
<dbReference type="GO" id="GO:0005737">
    <property type="term" value="C:cytoplasm"/>
    <property type="evidence" value="ECO:0007669"/>
    <property type="project" value="UniProtKB-SubCell"/>
</dbReference>
<dbReference type="GO" id="GO:0050660">
    <property type="term" value="F:flavin adenine dinucleotide binding"/>
    <property type="evidence" value="ECO:0007669"/>
    <property type="project" value="UniProtKB-UniRule"/>
</dbReference>
<dbReference type="GO" id="GO:0016645">
    <property type="term" value="F:oxidoreductase activity, acting on the CH-NH group of donors"/>
    <property type="evidence" value="ECO:0007669"/>
    <property type="project" value="InterPro"/>
</dbReference>
<dbReference type="GO" id="GO:0004808">
    <property type="term" value="F:tRNA (5-methylaminomethyl-2-thiouridylate)(34)-methyltransferase activity"/>
    <property type="evidence" value="ECO:0007669"/>
    <property type="project" value="UniProtKB-EC"/>
</dbReference>
<dbReference type="GO" id="GO:0032259">
    <property type="term" value="P:methylation"/>
    <property type="evidence" value="ECO:0007669"/>
    <property type="project" value="UniProtKB-KW"/>
</dbReference>
<dbReference type="GO" id="GO:0002098">
    <property type="term" value="P:tRNA wobble uridine modification"/>
    <property type="evidence" value="ECO:0007669"/>
    <property type="project" value="TreeGrafter"/>
</dbReference>
<dbReference type="FunFam" id="3.40.50.150:FF:000107">
    <property type="entry name" value="tRNA 5-methylaminomethyl-2-thiouridine biosynthesis bifunctional protein MnmC"/>
    <property type="match status" value="1"/>
</dbReference>
<dbReference type="Gene3D" id="3.30.9.10">
    <property type="entry name" value="D-Amino Acid Oxidase, subunit A, domain 2"/>
    <property type="match status" value="1"/>
</dbReference>
<dbReference type="Gene3D" id="3.50.50.60">
    <property type="entry name" value="FAD/NAD(P)-binding domain"/>
    <property type="match status" value="1"/>
</dbReference>
<dbReference type="Gene3D" id="3.40.50.150">
    <property type="entry name" value="Vaccinia Virus protein VP39"/>
    <property type="match status" value="1"/>
</dbReference>
<dbReference type="HAMAP" id="MF_01102">
    <property type="entry name" value="MnmC"/>
    <property type="match status" value="1"/>
</dbReference>
<dbReference type="InterPro" id="IPR006076">
    <property type="entry name" value="FAD-dep_OxRdtase"/>
</dbReference>
<dbReference type="InterPro" id="IPR036188">
    <property type="entry name" value="FAD/NAD-bd_sf"/>
</dbReference>
<dbReference type="InterPro" id="IPR008471">
    <property type="entry name" value="MnmC-like_methylTransf"/>
</dbReference>
<dbReference type="InterPro" id="IPR029063">
    <property type="entry name" value="SAM-dependent_MTases_sf"/>
</dbReference>
<dbReference type="InterPro" id="IPR023032">
    <property type="entry name" value="tRNA_MAMT_biosynth_bifunc_MnmC"/>
</dbReference>
<dbReference type="InterPro" id="IPR047785">
    <property type="entry name" value="tRNA_MNMC2"/>
</dbReference>
<dbReference type="InterPro" id="IPR017610">
    <property type="entry name" value="tRNA_S-uridine_synth_MnmC_C"/>
</dbReference>
<dbReference type="NCBIfam" id="TIGR03197">
    <property type="entry name" value="MnmC_Cterm"/>
    <property type="match status" value="1"/>
</dbReference>
<dbReference type="NCBIfam" id="NF002481">
    <property type="entry name" value="PRK01747.1-2"/>
    <property type="match status" value="1"/>
</dbReference>
<dbReference type="NCBIfam" id="NF002482">
    <property type="entry name" value="PRK01747.1-3"/>
    <property type="match status" value="1"/>
</dbReference>
<dbReference type="NCBIfam" id="NF002484">
    <property type="entry name" value="PRK01747.1-5"/>
    <property type="match status" value="1"/>
</dbReference>
<dbReference type="NCBIfam" id="NF033855">
    <property type="entry name" value="tRNA_MNMC2"/>
    <property type="match status" value="1"/>
</dbReference>
<dbReference type="PANTHER" id="PTHR13847">
    <property type="entry name" value="SARCOSINE DEHYDROGENASE-RELATED"/>
    <property type="match status" value="1"/>
</dbReference>
<dbReference type="PANTHER" id="PTHR13847:SF283">
    <property type="entry name" value="TRNA 5-METHYLAMINOMETHYL-2-THIOURIDINE BIOSYNTHESIS BIFUNCTIONAL PROTEIN MNMC"/>
    <property type="match status" value="1"/>
</dbReference>
<dbReference type="Pfam" id="PF01266">
    <property type="entry name" value="DAO"/>
    <property type="match status" value="1"/>
</dbReference>
<dbReference type="Pfam" id="PF05430">
    <property type="entry name" value="Methyltransf_30"/>
    <property type="match status" value="1"/>
</dbReference>
<dbReference type="SUPFAM" id="SSF51905">
    <property type="entry name" value="FAD/NAD(P)-binding domain"/>
    <property type="match status" value="1"/>
</dbReference>
<dbReference type="SUPFAM" id="SSF53335">
    <property type="entry name" value="S-adenosyl-L-methionine-dependent methyltransferases"/>
    <property type="match status" value="1"/>
</dbReference>
<name>MNMC_YERP3</name>